<feature type="chain" id="PRO_1000007167" description="Large ribosomal subunit protein bL28">
    <location>
        <begin position="1"/>
        <end position="78"/>
    </location>
</feature>
<feature type="region of interest" description="Disordered" evidence="2">
    <location>
        <begin position="1"/>
        <end position="31"/>
    </location>
</feature>
<evidence type="ECO:0000255" key="1">
    <source>
        <dbReference type="HAMAP-Rule" id="MF_00373"/>
    </source>
</evidence>
<evidence type="ECO:0000256" key="2">
    <source>
        <dbReference type="SAM" id="MobiDB-lite"/>
    </source>
</evidence>
<evidence type="ECO:0000305" key="3"/>
<keyword id="KW-1185">Reference proteome</keyword>
<keyword id="KW-0687">Ribonucleoprotein</keyword>
<keyword id="KW-0689">Ribosomal protein</keyword>
<sequence>MAAHCQVTGAEPGFGHSISHSHRRNKRRFDPNIQKKRYWVPSLRRNVTLQVSARGIKTIDVRGIDVVVAAILARGVKL</sequence>
<reference key="1">
    <citation type="journal article" date="2013" name="Stand. Genomic Sci.">
        <title>Complete genome sequence of Arthrobacter sp. strain FB24.</title>
        <authorList>
            <person name="Nakatsu C.H."/>
            <person name="Barabote R."/>
            <person name="Thompson S."/>
            <person name="Bruce D."/>
            <person name="Detter C."/>
            <person name="Brettin T."/>
            <person name="Han C."/>
            <person name="Beasley F."/>
            <person name="Chen W."/>
            <person name="Konopka A."/>
            <person name="Xie G."/>
        </authorList>
    </citation>
    <scope>NUCLEOTIDE SEQUENCE [LARGE SCALE GENOMIC DNA]</scope>
    <source>
        <strain>FB24</strain>
    </source>
</reference>
<comment type="similarity">
    <text evidence="1">Belongs to the bacterial ribosomal protein bL28 family.</text>
</comment>
<proteinExistence type="inferred from homology"/>
<dbReference type="EMBL" id="CP000454">
    <property type="protein sequence ID" value="ABK05296.1"/>
    <property type="molecule type" value="Genomic_DNA"/>
</dbReference>
<dbReference type="RefSeq" id="WP_011693744.1">
    <property type="nucleotide sequence ID" value="NC_008541.1"/>
</dbReference>
<dbReference type="SMR" id="A0K1X6"/>
<dbReference type="STRING" id="290399.Arth_3921"/>
<dbReference type="KEGG" id="art:Arth_3921"/>
<dbReference type="eggNOG" id="COG0227">
    <property type="taxonomic scope" value="Bacteria"/>
</dbReference>
<dbReference type="HOGENOM" id="CLU_064548_3_1_11"/>
<dbReference type="OrthoDB" id="9805609at2"/>
<dbReference type="Proteomes" id="UP000000754">
    <property type="component" value="Chromosome"/>
</dbReference>
<dbReference type="GO" id="GO:1990904">
    <property type="term" value="C:ribonucleoprotein complex"/>
    <property type="evidence" value="ECO:0007669"/>
    <property type="project" value="UniProtKB-KW"/>
</dbReference>
<dbReference type="GO" id="GO:0005840">
    <property type="term" value="C:ribosome"/>
    <property type="evidence" value="ECO:0007669"/>
    <property type="project" value="UniProtKB-KW"/>
</dbReference>
<dbReference type="GO" id="GO:0003735">
    <property type="term" value="F:structural constituent of ribosome"/>
    <property type="evidence" value="ECO:0007669"/>
    <property type="project" value="InterPro"/>
</dbReference>
<dbReference type="GO" id="GO:0006412">
    <property type="term" value="P:translation"/>
    <property type="evidence" value="ECO:0007669"/>
    <property type="project" value="UniProtKB-UniRule"/>
</dbReference>
<dbReference type="FunFam" id="2.30.170.40:FF:000001">
    <property type="entry name" value="50S ribosomal protein L28"/>
    <property type="match status" value="1"/>
</dbReference>
<dbReference type="Gene3D" id="2.30.170.40">
    <property type="entry name" value="Ribosomal protein L28/L24"/>
    <property type="match status" value="1"/>
</dbReference>
<dbReference type="HAMAP" id="MF_00373">
    <property type="entry name" value="Ribosomal_bL28"/>
    <property type="match status" value="1"/>
</dbReference>
<dbReference type="InterPro" id="IPR026569">
    <property type="entry name" value="Ribosomal_bL28"/>
</dbReference>
<dbReference type="InterPro" id="IPR034704">
    <property type="entry name" value="Ribosomal_bL28/bL31-like_sf"/>
</dbReference>
<dbReference type="InterPro" id="IPR001383">
    <property type="entry name" value="Ribosomal_bL28_bact-type"/>
</dbReference>
<dbReference type="InterPro" id="IPR037147">
    <property type="entry name" value="Ribosomal_bL28_sf"/>
</dbReference>
<dbReference type="NCBIfam" id="TIGR00009">
    <property type="entry name" value="L28"/>
    <property type="match status" value="1"/>
</dbReference>
<dbReference type="PANTHER" id="PTHR13528">
    <property type="entry name" value="39S RIBOSOMAL PROTEIN L28, MITOCHONDRIAL"/>
    <property type="match status" value="1"/>
</dbReference>
<dbReference type="PANTHER" id="PTHR13528:SF2">
    <property type="entry name" value="LARGE RIBOSOMAL SUBUNIT PROTEIN BL28M"/>
    <property type="match status" value="1"/>
</dbReference>
<dbReference type="Pfam" id="PF00830">
    <property type="entry name" value="Ribosomal_L28"/>
    <property type="match status" value="1"/>
</dbReference>
<dbReference type="SUPFAM" id="SSF143800">
    <property type="entry name" value="L28p-like"/>
    <property type="match status" value="1"/>
</dbReference>
<name>RL28_ARTS2</name>
<accession>A0K1X6</accession>
<protein>
    <recommendedName>
        <fullName evidence="1">Large ribosomal subunit protein bL28</fullName>
    </recommendedName>
    <alternativeName>
        <fullName evidence="3">50S ribosomal protein L28</fullName>
    </alternativeName>
</protein>
<organism>
    <name type="scientific">Arthrobacter sp. (strain FB24)</name>
    <dbReference type="NCBI Taxonomy" id="290399"/>
    <lineage>
        <taxon>Bacteria</taxon>
        <taxon>Bacillati</taxon>
        <taxon>Actinomycetota</taxon>
        <taxon>Actinomycetes</taxon>
        <taxon>Micrococcales</taxon>
        <taxon>Micrococcaceae</taxon>
        <taxon>Arthrobacter</taxon>
    </lineage>
</organism>
<gene>
    <name evidence="1" type="primary">rpmB</name>
    <name type="ordered locus">Arth_3921</name>
</gene>